<comment type="function">
    <text evidence="2">Catalyzes the first step in biosynthesis of glycosaminoglycan. Transfers D-xylose from UDP-D-xylose to specific serine residues of the core protein.</text>
</comment>
<comment type="catalytic activity">
    <reaction evidence="2">
        <text>UDP-alpha-D-xylose + L-seryl-[protein] = 3-O-(beta-D-xylosyl)-L-seryl-[protein] + UDP + H(+)</text>
        <dbReference type="Rhea" id="RHEA:50192"/>
        <dbReference type="Rhea" id="RHEA-COMP:9863"/>
        <dbReference type="Rhea" id="RHEA-COMP:12567"/>
        <dbReference type="ChEBI" id="CHEBI:15378"/>
        <dbReference type="ChEBI" id="CHEBI:29999"/>
        <dbReference type="ChEBI" id="CHEBI:57632"/>
        <dbReference type="ChEBI" id="CHEBI:58223"/>
        <dbReference type="ChEBI" id="CHEBI:132085"/>
        <dbReference type="EC" id="2.4.2.26"/>
    </reaction>
</comment>
<comment type="cofactor">
    <cofactor evidence="2">
        <name>Ca(2+)</name>
        <dbReference type="ChEBI" id="CHEBI:29108"/>
    </cofactor>
    <cofactor evidence="2">
        <name>Mn(2+)</name>
        <dbReference type="ChEBI" id="CHEBI:29035"/>
    </cofactor>
    <cofactor evidence="2">
        <name>Mg(2+)</name>
        <dbReference type="ChEBI" id="CHEBI:18420"/>
    </cofactor>
    <text evidence="2">Divalent metal cations. Calcium or manganese or magnesium.</text>
</comment>
<comment type="pathway">
    <text>Glycan metabolism; chondroitin sulfate biosynthesis.</text>
</comment>
<comment type="pathway">
    <text>Glycan metabolism; heparan sulfate biosynthesis.</text>
</comment>
<comment type="subcellular location">
    <subcellularLocation>
        <location evidence="1">Endoplasmic reticulum membrane</location>
        <topology evidence="1">Single-pass type II membrane protein</topology>
    </subcellularLocation>
    <subcellularLocation>
        <location evidence="1">Golgi apparatus membrane</location>
        <topology evidence="1">Single-pass type II membrane protein</topology>
    </subcellularLocation>
</comment>
<comment type="similarity">
    <text evidence="6">Belongs to the glycosyltransferase 14 family. XylT subfamily.</text>
</comment>
<comment type="sequence caution" evidence="6">
    <conflict type="erroneous gene model prediction">
        <sequence resource="EMBL-CDS" id="EAL29776"/>
    </conflict>
</comment>
<feature type="chain" id="PRO_0000191415" description="Xylosyltransferase oxt">
    <location>
        <begin position="1"/>
        <end position="880"/>
    </location>
</feature>
<feature type="topological domain" description="Cytoplasmic" evidence="4">
    <location>
        <begin position="1"/>
        <end position="14"/>
    </location>
</feature>
<feature type="transmembrane region" description="Helical; Signal-anchor for type II membrane protein" evidence="4">
    <location>
        <begin position="15"/>
        <end position="35"/>
    </location>
</feature>
<feature type="topological domain" description="Lumenal" evidence="4">
    <location>
        <begin position="36"/>
        <end position="880"/>
    </location>
</feature>
<feature type="domain" description="WSC" evidence="5">
    <location>
        <begin position="138"/>
        <end position="232"/>
    </location>
</feature>
<feature type="binding site" evidence="3">
    <location>
        <position position="287"/>
    </location>
    <ligand>
        <name>UDP-alpha-D-xylose</name>
        <dbReference type="ChEBI" id="CHEBI:57632"/>
    </ligand>
</feature>
<feature type="binding site" evidence="3">
    <location>
        <begin position="316"/>
        <end position="318"/>
    </location>
    <ligand>
        <name>UDP-alpha-D-xylose</name>
        <dbReference type="ChEBI" id="CHEBI:57632"/>
    </ligand>
</feature>
<feature type="binding site" evidence="3">
    <location>
        <begin position="419"/>
        <end position="420"/>
    </location>
    <ligand>
        <name>UDP-alpha-D-xylose</name>
        <dbReference type="ChEBI" id="CHEBI:57632"/>
    </ligand>
</feature>
<feature type="binding site" evidence="3">
    <location>
        <position position="502"/>
    </location>
    <ligand>
        <name>UDP-alpha-D-xylose</name>
        <dbReference type="ChEBI" id="CHEBI:57632"/>
    </ligand>
</feature>
<feature type="binding site" evidence="3">
    <location>
        <begin position="526"/>
        <end position="527"/>
    </location>
    <ligand>
        <name>UDP-alpha-D-xylose</name>
        <dbReference type="ChEBI" id="CHEBI:57632"/>
    </ligand>
</feature>
<feature type="glycosylation site" description="N-linked (GlcNAc...) asparagine" evidence="4">
    <location>
        <position position="135"/>
    </location>
</feature>
<feature type="glycosylation site" description="N-linked (GlcNAc...) asparagine" evidence="4">
    <location>
        <position position="139"/>
    </location>
</feature>
<feature type="glycosylation site" description="N-linked (GlcNAc...) asparagine" evidence="4">
    <location>
        <position position="346"/>
    </location>
</feature>
<feature type="glycosylation site" description="N-linked (GlcNAc...) asparagine" evidence="4">
    <location>
        <position position="700"/>
    </location>
</feature>
<feature type="glycosylation site" description="N-linked (GlcNAc...) asparagine" evidence="4">
    <location>
        <position position="729"/>
    </location>
</feature>
<feature type="disulfide bond" evidence="3">
    <location>
        <begin position="87"/>
        <end position="115"/>
    </location>
</feature>
<feature type="disulfide bond" evidence="3">
    <location>
        <begin position="131"/>
        <end position="469"/>
    </location>
</feature>
<feature type="disulfide bond" evidence="3">
    <location>
        <begin position="488"/>
        <end position="501"/>
    </location>
</feature>
<feature type="disulfide bond" evidence="3">
    <location>
        <begin position="490"/>
        <end position="499"/>
    </location>
</feature>
<feature type="disulfide bond" evidence="3">
    <location>
        <begin position="846"/>
        <end position="859"/>
    </location>
</feature>
<organism evidence="7">
    <name type="scientific">Drosophila pseudoobscura pseudoobscura</name>
    <name type="common">Fruit fly</name>
    <dbReference type="NCBI Taxonomy" id="46245"/>
    <lineage>
        <taxon>Eukaryota</taxon>
        <taxon>Metazoa</taxon>
        <taxon>Ecdysozoa</taxon>
        <taxon>Arthropoda</taxon>
        <taxon>Hexapoda</taxon>
        <taxon>Insecta</taxon>
        <taxon>Pterygota</taxon>
        <taxon>Neoptera</taxon>
        <taxon>Endopterygota</taxon>
        <taxon>Diptera</taxon>
        <taxon>Brachycera</taxon>
        <taxon>Muscomorpha</taxon>
        <taxon>Ephydroidea</taxon>
        <taxon>Drosophilidae</taxon>
        <taxon>Drosophila</taxon>
        <taxon>Sophophora</taxon>
    </lineage>
</organism>
<keyword id="KW-1015">Disulfide bond</keyword>
<keyword id="KW-0256">Endoplasmic reticulum</keyword>
<keyword id="KW-0325">Glycoprotein</keyword>
<keyword id="KW-0328">Glycosyltransferase</keyword>
<keyword id="KW-0333">Golgi apparatus</keyword>
<keyword id="KW-0460">Magnesium</keyword>
<keyword id="KW-0464">Manganese</keyword>
<keyword id="KW-0472">Membrane</keyword>
<keyword id="KW-0479">Metal-binding</keyword>
<keyword id="KW-1185">Reference proteome</keyword>
<keyword id="KW-0735">Signal-anchor</keyword>
<keyword id="KW-0808">Transferase</keyword>
<keyword id="KW-0812">Transmembrane</keyword>
<keyword id="KW-1133">Transmembrane helix</keyword>
<protein>
    <recommendedName>
        <fullName evidence="6">Xylosyltransferase oxt</fullName>
        <ecNumber evidence="2">2.4.2.26</ecNumber>
    </recommendedName>
    <alternativeName>
        <fullName evidence="2">Peptide O-xylosyltransferase</fullName>
    </alternativeName>
</protein>
<accession>Q5QQ53</accession>
<accession>Q2LYT4</accession>
<name>XYLT_DROPS</name>
<dbReference type="EC" id="2.4.2.26" evidence="2"/>
<dbReference type="EMBL" id="AJ866722">
    <property type="protein sequence ID" value="CAI28925.1"/>
    <property type="molecule type" value="mRNA"/>
</dbReference>
<dbReference type="EMBL" id="CH379069">
    <property type="protein sequence ID" value="EAL29776.1"/>
    <property type="status" value="ALT_SEQ"/>
    <property type="molecule type" value="Genomic_DNA"/>
</dbReference>
<dbReference type="RefSeq" id="XP_001354039.1">
    <property type="nucleotide sequence ID" value="XM_001354003.3"/>
</dbReference>
<dbReference type="SMR" id="Q5QQ53"/>
<dbReference type="FunCoup" id="Q5QQ53">
    <property type="interactions" value="426"/>
</dbReference>
<dbReference type="STRING" id="46245.Q5QQ53"/>
<dbReference type="GlyCosmos" id="Q5QQ53">
    <property type="glycosylation" value="5 sites, No reported glycans"/>
</dbReference>
<dbReference type="EnsemblMetazoa" id="FBtr0275593">
    <property type="protein sequence ID" value="FBpp0274031"/>
    <property type="gene ID" value="FBgn0076829"/>
</dbReference>
<dbReference type="GeneID" id="4813803"/>
<dbReference type="KEGG" id="dpo:4813803"/>
<dbReference type="CTD" id="5020"/>
<dbReference type="eggNOG" id="KOG0799">
    <property type="taxonomic scope" value="Eukaryota"/>
</dbReference>
<dbReference type="eggNOG" id="KOG4157">
    <property type="taxonomic scope" value="Eukaryota"/>
</dbReference>
<dbReference type="HOGENOM" id="CLU_012840_1_0_1"/>
<dbReference type="InParanoid" id="Q5QQ53"/>
<dbReference type="OMA" id="RECFCGF"/>
<dbReference type="PhylomeDB" id="Q5QQ53"/>
<dbReference type="UniPathway" id="UPA00755"/>
<dbReference type="UniPathway" id="UPA00756"/>
<dbReference type="ChiTaRS" id="oxt">
    <property type="organism name" value="fly"/>
</dbReference>
<dbReference type="Proteomes" id="UP000001819">
    <property type="component" value="Chromosome X"/>
</dbReference>
<dbReference type="Bgee" id="FBgn0076829">
    <property type="expression patterns" value="Expressed in female reproductive system and 3 other cell types or tissues"/>
</dbReference>
<dbReference type="GO" id="GO:0005789">
    <property type="term" value="C:endoplasmic reticulum membrane"/>
    <property type="evidence" value="ECO:0007669"/>
    <property type="project" value="UniProtKB-SubCell"/>
</dbReference>
<dbReference type="GO" id="GO:0000139">
    <property type="term" value="C:Golgi membrane"/>
    <property type="evidence" value="ECO:0007669"/>
    <property type="project" value="UniProtKB-SubCell"/>
</dbReference>
<dbReference type="GO" id="GO:0046872">
    <property type="term" value="F:metal ion binding"/>
    <property type="evidence" value="ECO:0007669"/>
    <property type="project" value="UniProtKB-KW"/>
</dbReference>
<dbReference type="GO" id="GO:0030158">
    <property type="term" value="F:protein xylosyltransferase activity"/>
    <property type="evidence" value="ECO:0000250"/>
    <property type="project" value="UniProtKB"/>
</dbReference>
<dbReference type="GO" id="GO:0050650">
    <property type="term" value="P:chondroitin sulfate proteoglycan biosynthetic process"/>
    <property type="evidence" value="ECO:0000250"/>
    <property type="project" value="UniProtKB"/>
</dbReference>
<dbReference type="GO" id="GO:0015012">
    <property type="term" value="P:heparan sulfate proteoglycan biosynthetic process"/>
    <property type="evidence" value="ECO:0000250"/>
    <property type="project" value="UniProtKB"/>
</dbReference>
<dbReference type="InterPro" id="IPR003406">
    <property type="entry name" value="Glyco_trans_14"/>
</dbReference>
<dbReference type="InterPro" id="IPR002889">
    <property type="entry name" value="WSC_carb-bd"/>
</dbReference>
<dbReference type="InterPro" id="IPR043538">
    <property type="entry name" value="XYLT"/>
</dbReference>
<dbReference type="InterPro" id="IPR024448">
    <property type="entry name" value="XylT_C"/>
</dbReference>
<dbReference type="PANTHER" id="PTHR46025">
    <property type="entry name" value="XYLOSYLTRANSFERASE OXT"/>
    <property type="match status" value="1"/>
</dbReference>
<dbReference type="PANTHER" id="PTHR46025:SF3">
    <property type="entry name" value="XYLOSYLTRANSFERASE OXT"/>
    <property type="match status" value="1"/>
</dbReference>
<dbReference type="Pfam" id="PF02485">
    <property type="entry name" value="Branch"/>
    <property type="match status" value="1"/>
</dbReference>
<dbReference type="Pfam" id="PF01822">
    <property type="entry name" value="WSC"/>
    <property type="match status" value="1"/>
</dbReference>
<dbReference type="Pfam" id="PF12529">
    <property type="entry name" value="Xylo_C"/>
    <property type="match status" value="1"/>
</dbReference>
<dbReference type="SMART" id="SM00321">
    <property type="entry name" value="WSC"/>
    <property type="match status" value="1"/>
</dbReference>
<dbReference type="PROSITE" id="PS51212">
    <property type="entry name" value="WSC"/>
    <property type="match status" value="1"/>
</dbReference>
<sequence length="880" mass="99651">MEQSVSARWLRRYRPVLIILVLIFGIQLFLAYKSVDIGGGSGSGLDVDAAQRSQRDLASNPVIAEPPESLPRPARLTANQLGFQPECDIQAKEAISALQRAKTKDCRQHIAQIACSIQAGRFYAIQLKSSCPSGNHTANVSLGCYRDEKDRRLLGGYYTSFKNSNSPNLCLELCLQSGYPYAGVQYGRECFCGFDTPPKAAKLPDSSCNIKCLGNAREICGGFYAMNIYETGIAKFTAQLAASTPPTGAKRVRIAFLLTINGRALRQVHRLLKALYAPEHVYYIHVDERQDYLYRKLLELEQKFPNIRLARKRFSTIWGGASLLTMLLQCMEDLLKSKWQWDFVINLSESDFPVKTLDKLVDFLSANRGRNFVKGHGRETQKFIQKQGLDRTFVECDTHMWRIGDRKLPAGIQVDGGSDWVALSRPFVAYVTHPKKEDELLQALLKLFRHTLLPAESFFHTVLRNTHHCHTYVDNNLHVTNWKRKQGCKCQYKHVVDWCGCSPNDFMPDDWPRLLATEQKSLFFARKFEPIINQAVLLQLEEWLYGPYTSEYLNLHGYWQSLYHHEDVHGSADDLVRSVGDSLMRLAGSQARVDPLELLELTHYLHRDQYKGFLVRFSARRATGQDVQLETRVRPVQHGKLARNARFSKRLRNFEVSTDFDQKEQVARNFGKLLGPQSDLVLSYTYQGSTDSGAASHSYNLTLLWIDPLGRLQDFNELHVEDSSTDLINHSKTLLSHPITPGVWTAKLIGRSSIYAQLKFLISPMAYGNGEPLETTPEAEKRNGGLGIALPDDFELPVEWQQHLHTDDEQFSLREEALANGKLTGPPLHRWIDDLVGKFFQLRESCVVDAGTELSLPLCSDAPWSSLAPDPKSDVDALLK</sequence>
<reference key="1">
    <citation type="submission" date="2004-11" db="EMBL/GenBank/DDBJ databases">
        <title>Phylogeny of animal protein xylosyltransferases.</title>
        <authorList>
            <person name="Ouzzine M."/>
            <person name="Fournel-Gigleux S."/>
            <person name="Mollicone R."/>
            <person name="Oriol R."/>
        </authorList>
    </citation>
    <scope>NUCLEOTIDE SEQUENCE [MRNA]</scope>
</reference>
<reference key="2">
    <citation type="journal article" date="2005" name="Genome Res.">
        <title>Comparative genome sequencing of Drosophila pseudoobscura: chromosomal, gene, and cis-element evolution.</title>
        <authorList>
            <person name="Richards S."/>
            <person name="Liu Y."/>
            <person name="Bettencourt B.R."/>
            <person name="Hradecky P."/>
            <person name="Letovsky S."/>
            <person name="Nielsen R."/>
            <person name="Thornton K."/>
            <person name="Hubisz M.J."/>
            <person name="Chen R."/>
            <person name="Meisel R.P."/>
            <person name="Couronne O."/>
            <person name="Hua S."/>
            <person name="Smith M.A."/>
            <person name="Zhang P."/>
            <person name="Liu J."/>
            <person name="Bussemaker H.J."/>
            <person name="van Batenburg M.F."/>
            <person name="Howells S.L."/>
            <person name="Scherer S.E."/>
            <person name="Sodergren E."/>
            <person name="Matthews B.B."/>
            <person name="Crosby M.A."/>
            <person name="Schroeder A.J."/>
            <person name="Ortiz-Barrientos D."/>
            <person name="Rives C.M."/>
            <person name="Metzker M.L."/>
            <person name="Muzny D.M."/>
            <person name="Scott G."/>
            <person name="Steffen D."/>
            <person name="Wheeler D.A."/>
            <person name="Worley K.C."/>
            <person name="Havlak P."/>
            <person name="Durbin K.J."/>
            <person name="Egan A."/>
            <person name="Gill R."/>
            <person name="Hume J."/>
            <person name="Morgan M.B."/>
            <person name="Miner G."/>
            <person name="Hamilton C."/>
            <person name="Huang Y."/>
            <person name="Waldron L."/>
            <person name="Verduzco D."/>
            <person name="Clerc-Blankenburg K.P."/>
            <person name="Dubchak I."/>
            <person name="Noor M.A.F."/>
            <person name="Anderson W."/>
            <person name="White K.P."/>
            <person name="Clark A.G."/>
            <person name="Schaeffer S.W."/>
            <person name="Gelbart W.M."/>
            <person name="Weinstock G.M."/>
            <person name="Gibbs R.A."/>
        </authorList>
    </citation>
    <scope>NUCLEOTIDE SEQUENCE [LARGE SCALE GENOMIC DNA]</scope>
    <source>
        <strain>MV2-25 / Tucson 14011-0121.94</strain>
    </source>
</reference>
<evidence type="ECO:0000250" key="1"/>
<evidence type="ECO:0000250" key="2">
    <source>
        <dbReference type="UniProtKB" id="Q7KVA1"/>
    </source>
</evidence>
<evidence type="ECO:0000250" key="3">
    <source>
        <dbReference type="UniProtKB" id="Q86Y38"/>
    </source>
</evidence>
<evidence type="ECO:0000255" key="4"/>
<evidence type="ECO:0000255" key="5">
    <source>
        <dbReference type="PROSITE-ProRule" id="PRU00558"/>
    </source>
</evidence>
<evidence type="ECO:0000305" key="6"/>
<evidence type="ECO:0000312" key="7">
    <source>
        <dbReference type="Proteomes" id="UP000001819"/>
    </source>
</evidence>
<proteinExistence type="evidence at transcript level"/>
<gene>
    <name evidence="2" type="primary">oxt</name>
    <name type="synonym">xt</name>
    <name type="ORF">GA16815</name>
</gene>